<name>NUOA_SALPK</name>
<evidence type="ECO:0000255" key="1">
    <source>
        <dbReference type="HAMAP-Rule" id="MF_01394"/>
    </source>
</evidence>
<feature type="chain" id="PRO_0000362772" description="NADH-quinone oxidoreductase subunit A">
    <location>
        <begin position="1"/>
        <end position="147"/>
    </location>
</feature>
<feature type="transmembrane region" description="Helical" evidence="1">
    <location>
        <begin position="16"/>
        <end position="36"/>
    </location>
</feature>
<feature type="transmembrane region" description="Helical" evidence="1">
    <location>
        <begin position="68"/>
        <end position="88"/>
    </location>
</feature>
<feature type="transmembrane region" description="Helical" evidence="1">
    <location>
        <begin position="97"/>
        <end position="117"/>
    </location>
</feature>
<accession>B5BCL8</accession>
<gene>
    <name evidence="1" type="primary">nuoA</name>
    <name type="ordered locus">SSPA0500</name>
</gene>
<reference key="1">
    <citation type="journal article" date="2009" name="BMC Genomics">
        <title>Pseudogene accumulation in the evolutionary histories of Salmonella enterica serovars Paratyphi A and Typhi.</title>
        <authorList>
            <person name="Holt K.E."/>
            <person name="Thomson N.R."/>
            <person name="Wain J."/>
            <person name="Langridge G.C."/>
            <person name="Hasan R."/>
            <person name="Bhutta Z.A."/>
            <person name="Quail M.A."/>
            <person name="Norbertczak H."/>
            <person name="Walker D."/>
            <person name="Simmonds M."/>
            <person name="White B."/>
            <person name="Bason N."/>
            <person name="Mungall K."/>
            <person name="Dougan G."/>
            <person name="Parkhill J."/>
        </authorList>
    </citation>
    <scope>NUCLEOTIDE SEQUENCE [LARGE SCALE GENOMIC DNA]</scope>
    <source>
        <strain>AKU_12601</strain>
    </source>
</reference>
<proteinExistence type="inferred from homology"/>
<comment type="function">
    <text evidence="1">NDH-1 shuttles electrons from NADH, via FMN and iron-sulfur (Fe-S) centers, to quinones in the respiratory chain. The immediate electron acceptor for the enzyme in this species is believed to be ubiquinone. Couples the redox reaction to proton translocation (for every two electrons transferred, four hydrogen ions are translocated across the cytoplasmic membrane), and thus conserves the redox energy in a proton gradient.</text>
</comment>
<comment type="catalytic activity">
    <reaction evidence="1">
        <text>a quinone + NADH + 5 H(+)(in) = a quinol + NAD(+) + 4 H(+)(out)</text>
        <dbReference type="Rhea" id="RHEA:57888"/>
        <dbReference type="ChEBI" id="CHEBI:15378"/>
        <dbReference type="ChEBI" id="CHEBI:24646"/>
        <dbReference type="ChEBI" id="CHEBI:57540"/>
        <dbReference type="ChEBI" id="CHEBI:57945"/>
        <dbReference type="ChEBI" id="CHEBI:132124"/>
    </reaction>
</comment>
<comment type="subunit">
    <text evidence="1">NDH-1 is composed of 13 different subunits. Subunits NuoA, H, J, K, L, M, N constitute the membrane sector of the complex.</text>
</comment>
<comment type="subcellular location">
    <subcellularLocation>
        <location evidence="1">Cell inner membrane</location>
        <topology evidence="1">Multi-pass membrane protein</topology>
    </subcellularLocation>
</comment>
<comment type="similarity">
    <text evidence="1">Belongs to the complex I subunit 3 family.</text>
</comment>
<sequence length="147" mass="16493">MSMSTSTEVIAHHWAFAIFLIVAIGLCCLMLVGGWFLGGRARARHKNVPFESGIDSVGTARLRLSAKFYLVAMFFVIFDVEALYLFAWSTSIRESGWVGFVEAAIFIFVLLAGLVYLARIGALDWTPARSRRERMNPETNSIANRQR</sequence>
<keyword id="KW-0997">Cell inner membrane</keyword>
<keyword id="KW-1003">Cell membrane</keyword>
<keyword id="KW-0472">Membrane</keyword>
<keyword id="KW-0520">NAD</keyword>
<keyword id="KW-0874">Quinone</keyword>
<keyword id="KW-1278">Translocase</keyword>
<keyword id="KW-0812">Transmembrane</keyword>
<keyword id="KW-1133">Transmembrane helix</keyword>
<keyword id="KW-0813">Transport</keyword>
<keyword id="KW-0830">Ubiquinone</keyword>
<dbReference type="EC" id="7.1.1.-" evidence="1"/>
<dbReference type="EMBL" id="FM200053">
    <property type="protein sequence ID" value="CAR58629.1"/>
    <property type="molecule type" value="Genomic_DNA"/>
</dbReference>
<dbReference type="RefSeq" id="WP_000062993.1">
    <property type="nucleotide sequence ID" value="NC_011147.1"/>
</dbReference>
<dbReference type="SMR" id="B5BCL8"/>
<dbReference type="GeneID" id="66756777"/>
<dbReference type="KEGG" id="sek:SSPA0500"/>
<dbReference type="HOGENOM" id="CLU_119549_2_0_6"/>
<dbReference type="Proteomes" id="UP000001869">
    <property type="component" value="Chromosome"/>
</dbReference>
<dbReference type="GO" id="GO:0030964">
    <property type="term" value="C:NADH dehydrogenase complex"/>
    <property type="evidence" value="ECO:0007669"/>
    <property type="project" value="TreeGrafter"/>
</dbReference>
<dbReference type="GO" id="GO:0005886">
    <property type="term" value="C:plasma membrane"/>
    <property type="evidence" value="ECO:0007669"/>
    <property type="project" value="UniProtKB-SubCell"/>
</dbReference>
<dbReference type="GO" id="GO:0008137">
    <property type="term" value="F:NADH dehydrogenase (ubiquinone) activity"/>
    <property type="evidence" value="ECO:0007669"/>
    <property type="project" value="InterPro"/>
</dbReference>
<dbReference type="GO" id="GO:0050136">
    <property type="term" value="F:NADH:ubiquinone reductase (non-electrogenic) activity"/>
    <property type="evidence" value="ECO:0007669"/>
    <property type="project" value="UniProtKB-UniRule"/>
</dbReference>
<dbReference type="GO" id="GO:0048038">
    <property type="term" value="F:quinone binding"/>
    <property type="evidence" value="ECO:0007669"/>
    <property type="project" value="UniProtKB-KW"/>
</dbReference>
<dbReference type="FunFam" id="1.20.58.1610:FF:000003">
    <property type="entry name" value="NADH-quinone oxidoreductase subunit A"/>
    <property type="match status" value="1"/>
</dbReference>
<dbReference type="Gene3D" id="1.20.58.1610">
    <property type="entry name" value="NADH:ubiquinone/plastoquinone oxidoreductase, chain 3"/>
    <property type="match status" value="1"/>
</dbReference>
<dbReference type="HAMAP" id="MF_01394">
    <property type="entry name" value="NDH1_NuoA"/>
    <property type="match status" value="1"/>
</dbReference>
<dbReference type="InterPro" id="IPR023043">
    <property type="entry name" value="NAD(P)H_OxRDtase_bac/plastid"/>
</dbReference>
<dbReference type="InterPro" id="IPR000440">
    <property type="entry name" value="NADH_UbQ/plastoQ_OxRdtase_su3"/>
</dbReference>
<dbReference type="InterPro" id="IPR038430">
    <property type="entry name" value="NDAH_ubi_oxred_su3_sf"/>
</dbReference>
<dbReference type="PANTHER" id="PTHR11058:SF21">
    <property type="entry name" value="NADH-QUINONE OXIDOREDUCTASE SUBUNIT A"/>
    <property type="match status" value="1"/>
</dbReference>
<dbReference type="PANTHER" id="PTHR11058">
    <property type="entry name" value="NADH-UBIQUINONE OXIDOREDUCTASE CHAIN 3"/>
    <property type="match status" value="1"/>
</dbReference>
<dbReference type="Pfam" id="PF00507">
    <property type="entry name" value="Oxidored_q4"/>
    <property type="match status" value="1"/>
</dbReference>
<organism>
    <name type="scientific">Salmonella paratyphi A (strain AKU_12601)</name>
    <dbReference type="NCBI Taxonomy" id="554290"/>
    <lineage>
        <taxon>Bacteria</taxon>
        <taxon>Pseudomonadati</taxon>
        <taxon>Pseudomonadota</taxon>
        <taxon>Gammaproteobacteria</taxon>
        <taxon>Enterobacterales</taxon>
        <taxon>Enterobacteriaceae</taxon>
        <taxon>Salmonella</taxon>
    </lineage>
</organism>
<protein>
    <recommendedName>
        <fullName evidence="1">NADH-quinone oxidoreductase subunit A</fullName>
        <ecNumber evidence="1">7.1.1.-</ecNumber>
    </recommendedName>
    <alternativeName>
        <fullName evidence="1">NADH dehydrogenase I subunit A</fullName>
    </alternativeName>
    <alternativeName>
        <fullName evidence="1">NDH-1 subunit A</fullName>
    </alternativeName>
    <alternativeName>
        <fullName evidence="1">NUO1</fullName>
    </alternativeName>
</protein>